<dbReference type="EMBL" id="X74402">
    <property type="protein sequence ID" value="CAA52413.1"/>
    <property type="molecule type" value="mRNA"/>
</dbReference>
<dbReference type="EMBL" id="U07952">
    <property type="protein sequence ID" value="AAB16909.1"/>
    <property type="molecule type" value="mRNA"/>
</dbReference>
<dbReference type="EMBL" id="BC099763">
    <property type="protein sequence ID" value="AAH99763.1"/>
    <property type="molecule type" value="mRNA"/>
</dbReference>
<dbReference type="EMBL" id="AF130987">
    <property type="protein sequence ID" value="AAD25536.1"/>
    <property type="molecule type" value="mRNA"/>
</dbReference>
<dbReference type="PIR" id="A54091">
    <property type="entry name" value="A54091"/>
</dbReference>
<dbReference type="PIR" id="B56024">
    <property type="entry name" value="B56024"/>
</dbReference>
<dbReference type="RefSeq" id="NP_058784.2">
    <property type="nucleotide sequence ID" value="NM_017088.2"/>
</dbReference>
<dbReference type="SMR" id="P50398"/>
<dbReference type="BioGRID" id="247236">
    <property type="interactions" value="2"/>
</dbReference>
<dbReference type="CORUM" id="P50398"/>
<dbReference type="FunCoup" id="P50398">
    <property type="interactions" value="2926"/>
</dbReference>
<dbReference type="IntAct" id="P50398">
    <property type="interactions" value="2"/>
</dbReference>
<dbReference type="MINT" id="P50398"/>
<dbReference type="STRING" id="10116.ENSRNOP00000070171"/>
<dbReference type="GlyGen" id="P50398">
    <property type="glycosylation" value="1 site, 1 O-linked glycan (1 site)"/>
</dbReference>
<dbReference type="iPTMnet" id="P50398"/>
<dbReference type="PhosphoSitePlus" id="P50398"/>
<dbReference type="SwissPalm" id="P50398"/>
<dbReference type="jPOST" id="P50398"/>
<dbReference type="PaxDb" id="10116-ENSRNOP00000053135"/>
<dbReference type="Ensembl" id="ENSRNOT00000089814.2">
    <property type="protein sequence ID" value="ENSRNOP00000070171.1"/>
    <property type="gene ID" value="ENSRNOG00000056870.2"/>
</dbReference>
<dbReference type="GeneID" id="25183"/>
<dbReference type="KEGG" id="rno:25183"/>
<dbReference type="AGR" id="RGD:2676"/>
<dbReference type="CTD" id="2664"/>
<dbReference type="RGD" id="2676">
    <property type="gene designation" value="Gdi1"/>
</dbReference>
<dbReference type="eggNOG" id="KOG1439">
    <property type="taxonomic scope" value="Eukaryota"/>
</dbReference>
<dbReference type="GeneTree" id="ENSGT00950000182994"/>
<dbReference type="HOGENOM" id="CLU_021695_0_0_1"/>
<dbReference type="InParanoid" id="P50398"/>
<dbReference type="OMA" id="GRICKVP"/>
<dbReference type="OrthoDB" id="9446342at2759"/>
<dbReference type="PhylomeDB" id="P50398"/>
<dbReference type="TreeFam" id="TF300449"/>
<dbReference type="Reactome" id="R-RNO-8876198">
    <property type="pathway name" value="RAB GEFs exchange GTP for GDP on RABs"/>
</dbReference>
<dbReference type="PRO" id="PR:P50398"/>
<dbReference type="Proteomes" id="UP000002494">
    <property type="component" value="Chromosome X"/>
</dbReference>
<dbReference type="Bgee" id="ENSRNOG00000056870">
    <property type="expression patterns" value="Expressed in cerebellum and 20 other cell types or tissues"/>
</dbReference>
<dbReference type="GO" id="GO:0030424">
    <property type="term" value="C:axon"/>
    <property type="evidence" value="ECO:0000314"/>
    <property type="project" value="RGD"/>
</dbReference>
<dbReference type="GO" id="GO:0005829">
    <property type="term" value="C:cytosol"/>
    <property type="evidence" value="ECO:0000318"/>
    <property type="project" value="GO_Central"/>
</dbReference>
<dbReference type="GO" id="GO:0005783">
    <property type="term" value="C:endoplasmic reticulum"/>
    <property type="evidence" value="ECO:0000266"/>
    <property type="project" value="RGD"/>
</dbReference>
<dbReference type="GO" id="GO:0005794">
    <property type="term" value="C:Golgi apparatus"/>
    <property type="evidence" value="ECO:0007669"/>
    <property type="project" value="UniProtKB-SubCell"/>
</dbReference>
<dbReference type="GO" id="GO:0030496">
    <property type="term" value="C:midbody"/>
    <property type="evidence" value="ECO:0000266"/>
    <property type="project" value="RGD"/>
</dbReference>
<dbReference type="GO" id="GO:0043209">
    <property type="term" value="C:myelin sheath"/>
    <property type="evidence" value="ECO:0000314"/>
    <property type="project" value="UniProtKB"/>
</dbReference>
<dbReference type="GO" id="GO:0043025">
    <property type="term" value="C:neuronal cell body"/>
    <property type="evidence" value="ECO:0000314"/>
    <property type="project" value="RGD"/>
</dbReference>
<dbReference type="GO" id="GO:0099523">
    <property type="term" value="C:presynaptic cytosol"/>
    <property type="evidence" value="ECO:0000314"/>
    <property type="project" value="SynGO"/>
</dbReference>
<dbReference type="GO" id="GO:0032991">
    <property type="term" value="C:protein-containing complex"/>
    <property type="evidence" value="ECO:0000314"/>
    <property type="project" value="RGD"/>
</dbReference>
<dbReference type="GO" id="GO:0005092">
    <property type="term" value="F:GDP-dissociation inhibitor activity"/>
    <property type="evidence" value="ECO:0000266"/>
    <property type="project" value="RGD"/>
</dbReference>
<dbReference type="GO" id="GO:0005096">
    <property type="term" value="F:GTPase activator activity"/>
    <property type="evidence" value="ECO:0007669"/>
    <property type="project" value="UniProtKB-KW"/>
</dbReference>
<dbReference type="GO" id="GO:0005093">
    <property type="term" value="F:Rab GDP-dissociation inhibitor activity"/>
    <property type="evidence" value="ECO:0000314"/>
    <property type="project" value="RGD"/>
</dbReference>
<dbReference type="GO" id="GO:0031267">
    <property type="term" value="F:small GTPase binding"/>
    <property type="evidence" value="ECO:0000353"/>
    <property type="project" value="UniProtKB"/>
</dbReference>
<dbReference type="GO" id="GO:0050771">
    <property type="term" value="P:negative regulation of axonogenesis"/>
    <property type="evidence" value="ECO:0000314"/>
    <property type="project" value="UniProtKB"/>
</dbReference>
<dbReference type="GO" id="GO:0090315">
    <property type="term" value="P:negative regulation of protein targeting to membrane"/>
    <property type="evidence" value="ECO:0000250"/>
    <property type="project" value="UniProtKB"/>
</dbReference>
<dbReference type="GO" id="GO:0045773">
    <property type="term" value="P:positive regulation of axon extension"/>
    <property type="evidence" value="ECO:0000315"/>
    <property type="project" value="RGD"/>
</dbReference>
<dbReference type="GO" id="GO:0034123">
    <property type="term" value="P:positive regulation of toll-like receptor signaling pathway"/>
    <property type="evidence" value="ECO:0000266"/>
    <property type="project" value="RGD"/>
</dbReference>
<dbReference type="GO" id="GO:0015031">
    <property type="term" value="P:protein transport"/>
    <property type="evidence" value="ECO:0007669"/>
    <property type="project" value="InterPro"/>
</dbReference>
<dbReference type="GO" id="GO:0032482">
    <property type="term" value="P:Rab protein signal transduction"/>
    <property type="evidence" value="ECO:0000250"/>
    <property type="project" value="UniProtKB"/>
</dbReference>
<dbReference type="GO" id="GO:0051592">
    <property type="term" value="P:response to calcium ion"/>
    <property type="evidence" value="ECO:0000314"/>
    <property type="project" value="RGD"/>
</dbReference>
<dbReference type="GO" id="GO:0016192">
    <property type="term" value="P:vesicle-mediated transport"/>
    <property type="evidence" value="ECO:0000318"/>
    <property type="project" value="GO_Central"/>
</dbReference>
<dbReference type="FunFam" id="1.10.405.10:FF:000001">
    <property type="entry name" value="Rab GDP dissociation inhibitor"/>
    <property type="match status" value="1"/>
</dbReference>
<dbReference type="FunFam" id="3.30.519.10:FF:000005">
    <property type="entry name" value="Rab GDP dissociation inhibitor"/>
    <property type="match status" value="1"/>
</dbReference>
<dbReference type="FunFam" id="3.30.519.10:FF:000014">
    <property type="entry name" value="Rab GDP dissociation inhibitor"/>
    <property type="match status" value="1"/>
</dbReference>
<dbReference type="FunFam" id="3.50.50.60:FF:000158">
    <property type="entry name" value="Rab GDP dissociation inhibitor"/>
    <property type="match status" value="1"/>
</dbReference>
<dbReference type="FunFam" id="3.50.50.60:FF:000232">
    <property type="entry name" value="Rab GDP dissociation inhibitor"/>
    <property type="match status" value="1"/>
</dbReference>
<dbReference type="Gene3D" id="3.50.50.60">
    <property type="entry name" value="FAD/NAD(P)-binding domain"/>
    <property type="match status" value="1"/>
</dbReference>
<dbReference type="Gene3D" id="1.10.405.10">
    <property type="entry name" value="Guanine Nucleotide Dissociation Inhibitor, domain 1"/>
    <property type="match status" value="1"/>
</dbReference>
<dbReference type="Gene3D" id="3.30.519.10">
    <property type="entry name" value="Guanine Nucleotide Dissociation Inhibitor, domain 2"/>
    <property type="match status" value="1"/>
</dbReference>
<dbReference type="InterPro" id="IPR036188">
    <property type="entry name" value="FAD/NAD-bd_sf"/>
</dbReference>
<dbReference type="InterPro" id="IPR018203">
    <property type="entry name" value="GDP_dissociation_inhibitor"/>
</dbReference>
<dbReference type="InterPro" id="IPR000806">
    <property type="entry name" value="RabGDI"/>
</dbReference>
<dbReference type="PANTHER" id="PTHR11787:SF3">
    <property type="entry name" value="RAB GDP DISSOCIATION INHIBITOR ALPHA"/>
    <property type="match status" value="1"/>
</dbReference>
<dbReference type="PANTHER" id="PTHR11787">
    <property type="entry name" value="RAB GDP-DISSOCIATION INHIBITOR"/>
    <property type="match status" value="1"/>
</dbReference>
<dbReference type="Pfam" id="PF00996">
    <property type="entry name" value="GDI"/>
    <property type="match status" value="1"/>
</dbReference>
<dbReference type="PRINTS" id="PR00892">
    <property type="entry name" value="RABGDI"/>
</dbReference>
<dbReference type="PRINTS" id="PR00891">
    <property type="entry name" value="RABGDIREP"/>
</dbReference>
<dbReference type="SUPFAM" id="SSF51905">
    <property type="entry name" value="FAD/NAD(P)-binding domain"/>
    <property type="match status" value="2"/>
</dbReference>
<sequence length="447" mass="50537">MDEEYDVIVLGTGLTECILSGIMSVNGKKVLHMDRNPYYGGESSSITPLEELYKRFQLLEGPPESMGRGRDWNVDLIPKFLMANGQLVKMLLYTEVTRYLDFKVVEGSFVYKGGKIYKVPSTETEALASNLMGMFEKRRFRKFLVFVANFDENDPKTFEGVDPQTTSMRDVYRKFDLGQDVIDFTGHALALYRTDDYLDQPCLETINRIKLYSESLARYGKSPYLYPLYGLGELPQGFARLSAIYGGTYMLNKPVDDIIMENGKVVGVKSEGEVARCKQLICDPSYIPDRVRKAGQVIRIICILSHPIKNTNDANSCQIIIPQNQVNRKSDIYVCMISYAHNVAAQGKYIAIASTTVETAEPEKEVEPALELLEPIDQKFVAISDLYEPIDDGSESQVFCSCSYDATTHFETTCNDIKDIYKRMAGSAFDFENMKRKQNDVFGEADQ</sequence>
<reference key="1">
    <citation type="journal article" date="1994" name="J. Biol. Chem.">
        <title>Molecular cloning and characterization of two rab GDI species from rat brain: brain-specific and ubiquitous types.</title>
        <authorList>
            <person name="Nishimura N."/>
            <person name="Nakamura H."/>
            <person name="Takai Y."/>
            <person name="Sano K."/>
        </authorList>
    </citation>
    <scope>NUCLEOTIDE SEQUENCE [MRNA]</scope>
    <scope>FUNCTION</scope>
    <scope>TISSUE SPECIFICITY</scope>
    <source>
        <strain>Sprague-Dawley</strain>
        <tissue>Brain</tissue>
    </source>
</reference>
<reference key="2">
    <citation type="journal article" date="1994" name="Mol. Cell. Biol.">
        <title>Cloning, characterization, and expression of a novel GDP dissociation inhibitor isoform from skeletal muscle.</title>
        <authorList>
            <person name="Shisheva A."/>
            <person name="Suedhof T.C."/>
            <person name="Czech M.P."/>
        </authorList>
    </citation>
    <scope>NUCLEOTIDE SEQUENCE [MRNA]</scope>
    <scope>FUNCTION</scope>
    <source>
        <tissue>Brain</tissue>
    </source>
</reference>
<reference key="3">
    <citation type="journal article" date="2004" name="Genome Res.">
        <title>The status, quality, and expansion of the NIH full-length cDNA project: the Mammalian Gene Collection (MGC).</title>
        <authorList>
            <consortium name="The MGC Project Team"/>
        </authorList>
    </citation>
    <scope>NUCLEOTIDE SEQUENCE [LARGE SCALE MRNA]</scope>
    <source>
        <tissue>Prostate</tissue>
    </source>
</reference>
<reference key="4">
    <citation type="journal article" date="2000" name="J. Cell. Biochem.">
        <title>Impairment of bile salt-dependent lipase secretion in human pancreatic tumoral SOJ-6 cells.</title>
        <authorList>
            <person name="Caillol N."/>
            <person name="Pasqualini E."/>
            <person name="Lloubes R."/>
            <person name="Lombardo D."/>
        </authorList>
    </citation>
    <scope>NUCLEOTIDE SEQUENCE [MRNA] OF 81-439</scope>
    <source>
        <tissue>Pancreas</tissue>
    </source>
</reference>
<reference key="5">
    <citation type="submission" date="2007-07" db="UniProtKB">
        <authorList>
            <person name="Lubec G."/>
            <person name="Afjehi-Sadat L."/>
            <person name="Chen W.-Q."/>
            <person name="Kang S.U."/>
        </authorList>
    </citation>
    <scope>PROTEIN SEQUENCE OF 80-98; 104-112; 143-156; 194-208; 211-218; 222-240 AND 279-290</scope>
    <scope>IDENTIFICATION BY MASS SPECTROMETRY</scope>
    <source>
        <strain>Sprague-Dawley</strain>
        <tissue>Brain</tissue>
        <tissue>Hippocampus</tissue>
    </source>
</reference>
<feature type="chain" id="PRO_0000056676" description="Rab GDP dissociation inhibitor alpha">
    <location>
        <begin position="1"/>
        <end position="447"/>
    </location>
</feature>
<feature type="modified residue" description="Phosphoserine" evidence="3">
    <location>
        <position position="427"/>
    </location>
</feature>
<feature type="sequence conflict" description="In Ref. 1; CAA52413." evidence="6" ref="1">
    <original>D</original>
    <variation>Y</variation>
    <location>
        <position position="199"/>
    </location>
</feature>
<feature type="sequence conflict" description="In Ref. 2; AAB16909." evidence="6" ref="2">
    <original>G</original>
    <variation>S</variation>
    <location>
        <position position="230"/>
    </location>
</feature>
<feature type="sequence conflict" description="In Ref. 2; AAB16909." evidence="6" ref="2">
    <original>S</original>
    <variation>P</variation>
    <location>
        <position position="330"/>
    </location>
</feature>
<name>GDIA_RAT</name>
<keyword id="KW-0963">Cytoplasm</keyword>
<keyword id="KW-0903">Direct protein sequencing</keyword>
<keyword id="KW-0333">Golgi apparatus</keyword>
<keyword id="KW-0343">GTPase activation</keyword>
<keyword id="KW-0597">Phosphoprotein</keyword>
<keyword id="KW-1185">Reference proteome</keyword>
<evidence type="ECO:0000250" key="1"/>
<evidence type="ECO:0000250" key="2">
    <source>
        <dbReference type="UniProtKB" id="P31150"/>
    </source>
</evidence>
<evidence type="ECO:0000250" key="3">
    <source>
        <dbReference type="UniProtKB" id="P50396"/>
    </source>
</evidence>
<evidence type="ECO:0000269" key="4">
    <source>
    </source>
</evidence>
<evidence type="ECO:0000269" key="5">
    <source>
    </source>
</evidence>
<evidence type="ECO:0000305" key="6"/>
<comment type="function">
    <text evidence="4 5">Regulates the GDP/GTP exchange reaction of most Rab proteins by inhibiting the dissociation of GDP from them, and the subsequent binding of GTP to them. Promotes the dissociation of GDP-bound Rab proteins from the membrane and inhibits their activation. Promotes the dissociation of RAB1A, RAB3A, RAB5A and RAB10 from membranes.</text>
</comment>
<comment type="subunit">
    <text evidence="2">Interacts with RHOH (By similarity). Interacts with the non-phosphorylated forms of RAB1A, RAB3A, RAB5A, RAB5B, RAB5C, RAB8A, RAB8B, RAB10, RAB12, RAB35, and RAB43 (By similarity).</text>
</comment>
<comment type="subcellular location">
    <subcellularLocation>
        <location>Cytoplasm</location>
    </subcellularLocation>
    <subcellularLocation>
        <location evidence="1">Golgi apparatus</location>
        <location evidence="1">trans-Golgi network</location>
    </subcellularLocation>
</comment>
<comment type="tissue specificity">
    <text evidence="5">High expression in brain, lower in other tissues.</text>
</comment>
<comment type="similarity">
    <text evidence="6">Belongs to the Rab GDI family.</text>
</comment>
<protein>
    <recommendedName>
        <fullName>Rab GDP dissociation inhibitor alpha</fullName>
        <shortName>Rab GDI alpha</shortName>
    </recommendedName>
    <alternativeName>
        <fullName>Guanosine diphosphate dissociation inhibitor 1</fullName>
        <shortName>GDI-1</shortName>
    </alternativeName>
</protein>
<proteinExistence type="evidence at protein level"/>
<accession>P50398</accession>
<accession>Q499U0</accession>
<accession>Q9R274</accession>
<organism>
    <name type="scientific">Rattus norvegicus</name>
    <name type="common">Rat</name>
    <dbReference type="NCBI Taxonomy" id="10116"/>
    <lineage>
        <taxon>Eukaryota</taxon>
        <taxon>Metazoa</taxon>
        <taxon>Chordata</taxon>
        <taxon>Craniata</taxon>
        <taxon>Vertebrata</taxon>
        <taxon>Euteleostomi</taxon>
        <taxon>Mammalia</taxon>
        <taxon>Eutheria</taxon>
        <taxon>Euarchontoglires</taxon>
        <taxon>Glires</taxon>
        <taxon>Rodentia</taxon>
        <taxon>Myomorpha</taxon>
        <taxon>Muroidea</taxon>
        <taxon>Muridae</taxon>
        <taxon>Murinae</taxon>
        <taxon>Rattus</taxon>
    </lineage>
</organism>
<gene>
    <name type="primary">Gdi1</name>
    <name type="synonym">Rabgdia</name>
</gene>